<proteinExistence type="evidence at protein level"/>
<evidence type="ECO:0000255" key="1"/>
<evidence type="ECO:0000255" key="2">
    <source>
        <dbReference type="PROSITE-ProRule" id="PRU00521"/>
    </source>
</evidence>
<evidence type="ECO:0000256" key="3">
    <source>
        <dbReference type="SAM" id="MobiDB-lite"/>
    </source>
</evidence>
<evidence type="ECO:0000269" key="4">
    <source>
    </source>
</evidence>
<evidence type="ECO:0000269" key="5">
    <source>
    </source>
</evidence>
<evidence type="ECO:0000269" key="6">
    <source>
    </source>
</evidence>
<evidence type="ECO:0000269" key="7">
    <source>
    </source>
</evidence>
<evidence type="ECO:0000269" key="8">
    <source>
    </source>
</evidence>
<evidence type="ECO:0000269" key="9">
    <source>
    </source>
</evidence>
<evidence type="ECO:0000269" key="10">
    <source>
    </source>
</evidence>
<evidence type="ECO:0000269" key="11">
    <source ref="2"/>
</evidence>
<evidence type="ECO:0000269" key="12">
    <source ref="3"/>
</evidence>
<evidence type="ECO:0000269" key="13">
    <source ref="6"/>
</evidence>
<evidence type="ECO:0000303" key="14">
    <source>
    </source>
</evidence>
<evidence type="ECO:0000303" key="15">
    <source ref="3"/>
</evidence>
<evidence type="ECO:0000305" key="16"/>
<evidence type="ECO:0000305" key="17">
    <source>
    </source>
</evidence>
<protein>
    <recommendedName>
        <fullName>C-C chemokine receptor-like 2</fullName>
    </recommendedName>
    <alternativeName>
        <fullName>Chemokine receptor CCR11</fullName>
    </alternativeName>
    <alternativeName>
        <fullName>Chemokine receptor X</fullName>
    </alternativeName>
    <alternativeName>
        <fullName>Putative MCP-1 chemokine receptor</fullName>
    </alternativeName>
</protein>
<organism>
    <name type="scientific">Homo sapiens</name>
    <name type="common">Human</name>
    <dbReference type="NCBI Taxonomy" id="9606"/>
    <lineage>
        <taxon>Eukaryota</taxon>
        <taxon>Metazoa</taxon>
        <taxon>Chordata</taxon>
        <taxon>Craniata</taxon>
        <taxon>Vertebrata</taxon>
        <taxon>Euteleostomi</taxon>
        <taxon>Mammalia</taxon>
        <taxon>Eutheria</taxon>
        <taxon>Euarchontoglires</taxon>
        <taxon>Primates</taxon>
        <taxon>Haplorrhini</taxon>
        <taxon>Catarrhini</taxon>
        <taxon>Hominidae</taxon>
        <taxon>Homo</taxon>
    </lineage>
</organism>
<name>CCRL2_HUMAN</name>
<accession>O00421</accession>
<accession>B4DKQ8</accession>
<accession>O75307</accession>
<accession>Q4VBB0</accession>
<accession>Q6IPX0</accession>
<accession>Q7KYQ9</accession>
<accession>Q96KP5</accession>
<accession>Q9UPG0</accession>
<dbReference type="EMBL" id="U97123">
    <property type="protein sequence ID" value="AAC39595.1"/>
    <property type="molecule type" value="mRNA"/>
</dbReference>
<dbReference type="EMBL" id="AF014958">
    <property type="protein sequence ID" value="AAB82106.1"/>
    <property type="molecule type" value="mRNA"/>
</dbReference>
<dbReference type="EMBL" id="AF015524">
    <property type="protein sequence ID" value="AAC34601.1"/>
    <property type="molecule type" value="mRNA"/>
</dbReference>
<dbReference type="EMBL" id="AF015525">
    <property type="protein sequence ID" value="AAC34602.1"/>
    <property type="molecule type" value="mRNA"/>
</dbReference>
<dbReference type="EMBL" id="AJ344142">
    <property type="protein sequence ID" value="CAC82985.1"/>
    <property type="molecule type" value="mRNA"/>
</dbReference>
<dbReference type="EMBL" id="AK296673">
    <property type="protein sequence ID" value="BAG59270.1"/>
    <property type="molecule type" value="mRNA"/>
</dbReference>
<dbReference type="EMBL" id="AY337001">
    <property type="protein sequence ID" value="AAQ76789.1"/>
    <property type="molecule type" value="mRNA"/>
</dbReference>
<dbReference type="EMBL" id="U95626">
    <property type="protein sequence ID" value="AAB57794.1"/>
    <property type="molecule type" value="Genomic_DNA"/>
</dbReference>
<dbReference type="EMBL" id="BC025717">
    <property type="protein sequence ID" value="AAH25717.1"/>
    <property type="molecule type" value="mRNA"/>
</dbReference>
<dbReference type="EMBL" id="BC071682">
    <property type="protein sequence ID" value="AAH71682.1"/>
    <property type="molecule type" value="mRNA"/>
</dbReference>
<dbReference type="EMBL" id="BC096075">
    <property type="protein sequence ID" value="AAH96075.1"/>
    <property type="molecule type" value="mRNA"/>
</dbReference>
<dbReference type="EMBL" id="BC096076">
    <property type="protein sequence ID" value="AAH96076.1"/>
    <property type="molecule type" value="mRNA"/>
</dbReference>
<dbReference type="EMBL" id="BC099623">
    <property type="protein sequence ID" value="AAH99623.1"/>
    <property type="molecule type" value="mRNA"/>
</dbReference>
<dbReference type="CCDS" id="CCDS43079.1">
    <molecule id="O00421-1"/>
</dbReference>
<dbReference type="CCDS" id="CCDS46814.1">
    <molecule id="O00421-2"/>
</dbReference>
<dbReference type="PIR" id="JC5942">
    <property type="entry name" value="JC5942"/>
</dbReference>
<dbReference type="RefSeq" id="NP_001124382.1">
    <molecule id="O00421-2"/>
    <property type="nucleotide sequence ID" value="NM_001130910.2"/>
</dbReference>
<dbReference type="RefSeq" id="NP_003956.2">
    <molecule id="O00421-1"/>
    <property type="nucleotide sequence ID" value="NM_003965.5"/>
</dbReference>
<dbReference type="RefSeq" id="XP_011532510.1">
    <molecule id="O00421-1"/>
    <property type="nucleotide sequence ID" value="XM_011534208.2"/>
</dbReference>
<dbReference type="RefSeq" id="XP_011532511.1">
    <property type="nucleotide sequence ID" value="XM_011534209.1"/>
</dbReference>
<dbReference type="RefSeq" id="XP_016862925.1">
    <property type="nucleotide sequence ID" value="XM_017007436.1"/>
</dbReference>
<dbReference type="RefSeq" id="XP_054204299.1">
    <molecule id="O00421-1"/>
    <property type="nucleotide sequence ID" value="XM_054348324.1"/>
</dbReference>
<dbReference type="RefSeq" id="XP_054204300.1">
    <molecule id="O00421-1"/>
    <property type="nucleotide sequence ID" value="XM_054348325.1"/>
</dbReference>
<dbReference type="SMR" id="O00421"/>
<dbReference type="BioGRID" id="114500">
    <property type="interactions" value="19"/>
</dbReference>
<dbReference type="FunCoup" id="O00421">
    <property type="interactions" value="354"/>
</dbReference>
<dbReference type="IntAct" id="O00421">
    <property type="interactions" value="6"/>
</dbReference>
<dbReference type="STRING" id="9606.ENSP00000349967"/>
<dbReference type="BindingDB" id="O00421"/>
<dbReference type="ChEMBL" id="CHEMBL2321627"/>
<dbReference type="GuidetoPHARMACOLOGY" id="78"/>
<dbReference type="GlyCosmos" id="O00421">
    <property type="glycosylation" value="1 site, No reported glycans"/>
</dbReference>
<dbReference type="GlyGen" id="O00421">
    <property type="glycosylation" value="1 site"/>
</dbReference>
<dbReference type="iPTMnet" id="O00421"/>
<dbReference type="PhosphoSitePlus" id="O00421"/>
<dbReference type="SwissPalm" id="O00421"/>
<dbReference type="BioMuta" id="CCRL2"/>
<dbReference type="jPOST" id="O00421"/>
<dbReference type="MassIVE" id="O00421"/>
<dbReference type="PaxDb" id="9606-ENSP00000349967"/>
<dbReference type="PeptideAtlas" id="O00421"/>
<dbReference type="ProteomicsDB" id="47877">
    <molecule id="O00421-1"/>
</dbReference>
<dbReference type="ProteomicsDB" id="47878">
    <molecule id="O00421-2"/>
</dbReference>
<dbReference type="Antibodypedia" id="6921">
    <property type="antibodies" value="447 antibodies from 34 providers"/>
</dbReference>
<dbReference type="DNASU" id="9034"/>
<dbReference type="Ensembl" id="ENST00000357392.4">
    <molecule id="O00421-2"/>
    <property type="protein sequence ID" value="ENSP00000349967.4"/>
    <property type="gene ID" value="ENSG00000121797.10"/>
</dbReference>
<dbReference type="Ensembl" id="ENST00000399036.4">
    <molecule id="O00421-1"/>
    <property type="protein sequence ID" value="ENSP00000381994.3"/>
    <property type="gene ID" value="ENSG00000121797.10"/>
</dbReference>
<dbReference type="Ensembl" id="ENST00000400880.3">
    <molecule id="O00421-1"/>
    <property type="protein sequence ID" value="ENSP00000383677.3"/>
    <property type="gene ID" value="ENSG00000121797.10"/>
</dbReference>
<dbReference type="Ensembl" id="ENST00000400882.2">
    <molecule id="O00421-1"/>
    <property type="protein sequence ID" value="ENSP00000383678.2"/>
    <property type="gene ID" value="ENSG00000121797.10"/>
</dbReference>
<dbReference type="GeneID" id="9034"/>
<dbReference type="KEGG" id="hsa:9034"/>
<dbReference type="MANE-Select" id="ENST00000399036.4">
    <property type="protein sequence ID" value="ENSP00000381994.3"/>
    <property type="RefSeq nucleotide sequence ID" value="NM_003965.5"/>
    <property type="RefSeq protein sequence ID" value="NP_003956.2"/>
</dbReference>
<dbReference type="UCSC" id="uc003cpp.5">
    <molecule id="O00421-1"/>
    <property type="organism name" value="human"/>
</dbReference>
<dbReference type="AGR" id="HGNC:1612"/>
<dbReference type="CTD" id="9034"/>
<dbReference type="DisGeNET" id="9034"/>
<dbReference type="GeneCards" id="CCRL2"/>
<dbReference type="HGNC" id="HGNC:1612">
    <property type="gene designation" value="CCRL2"/>
</dbReference>
<dbReference type="HPA" id="ENSG00000121797">
    <property type="expression patterns" value="Low tissue specificity"/>
</dbReference>
<dbReference type="MIM" id="608379">
    <property type="type" value="gene"/>
</dbReference>
<dbReference type="neXtProt" id="NX_O00421"/>
<dbReference type="OpenTargets" id="ENSG00000121797"/>
<dbReference type="PharmGKB" id="PA26175"/>
<dbReference type="VEuPathDB" id="HostDB:ENSG00000121797"/>
<dbReference type="eggNOG" id="KOG3656">
    <property type="taxonomic scope" value="Eukaryota"/>
</dbReference>
<dbReference type="GeneTree" id="ENSGT01020000230359"/>
<dbReference type="InParanoid" id="O00421"/>
<dbReference type="OMA" id="FYKPQME"/>
<dbReference type="OrthoDB" id="9802979at2759"/>
<dbReference type="PAN-GO" id="O00421">
    <property type="GO annotations" value="9 GO annotations based on evolutionary models"/>
</dbReference>
<dbReference type="PhylomeDB" id="O00421"/>
<dbReference type="TreeFam" id="TF330966"/>
<dbReference type="PathwayCommons" id="O00421"/>
<dbReference type="Reactome" id="R-HSA-380108">
    <property type="pathway name" value="Chemokine receptors bind chemokines"/>
</dbReference>
<dbReference type="SignaLink" id="O00421"/>
<dbReference type="BioGRID-ORCS" id="9034">
    <property type="hits" value="28 hits in 1150 CRISPR screens"/>
</dbReference>
<dbReference type="GeneWiki" id="CCRL2"/>
<dbReference type="GenomeRNAi" id="9034"/>
<dbReference type="Pharos" id="O00421">
    <property type="development level" value="Tchem"/>
</dbReference>
<dbReference type="PRO" id="PR:O00421"/>
<dbReference type="Proteomes" id="UP000005640">
    <property type="component" value="Chromosome 3"/>
</dbReference>
<dbReference type="RNAct" id="O00421">
    <property type="molecule type" value="protein"/>
</dbReference>
<dbReference type="Bgee" id="ENSG00000121797">
    <property type="expression patterns" value="Expressed in mucosa of transverse colon and 122 other cell types or tissues"/>
</dbReference>
<dbReference type="ExpressionAtlas" id="O00421">
    <property type="expression patterns" value="baseline and differential"/>
</dbReference>
<dbReference type="GO" id="GO:0005737">
    <property type="term" value="C:cytoplasm"/>
    <property type="evidence" value="ECO:0000318"/>
    <property type="project" value="GO_Central"/>
</dbReference>
<dbReference type="GO" id="GO:0009897">
    <property type="term" value="C:external side of plasma membrane"/>
    <property type="evidence" value="ECO:0000318"/>
    <property type="project" value="GO_Central"/>
</dbReference>
<dbReference type="GO" id="GO:0005886">
    <property type="term" value="C:plasma membrane"/>
    <property type="evidence" value="ECO:0000314"/>
    <property type="project" value="UniProtKB"/>
</dbReference>
<dbReference type="GO" id="GO:0019957">
    <property type="term" value="F:C-C chemokine binding"/>
    <property type="evidence" value="ECO:0000318"/>
    <property type="project" value="GO_Central"/>
</dbReference>
<dbReference type="GO" id="GO:0016493">
    <property type="term" value="F:C-C chemokine receptor activity"/>
    <property type="evidence" value="ECO:0000318"/>
    <property type="project" value="GO_Central"/>
</dbReference>
<dbReference type="GO" id="GO:0048020">
    <property type="term" value="F:CCR chemokine receptor binding"/>
    <property type="evidence" value="ECO:0000353"/>
    <property type="project" value="UniProtKB"/>
</dbReference>
<dbReference type="GO" id="GO:0004950">
    <property type="term" value="F:chemokine receptor activity"/>
    <property type="evidence" value="ECO:0000304"/>
    <property type="project" value="ProtInc"/>
</dbReference>
<dbReference type="GO" id="GO:0042379">
    <property type="term" value="F:chemokine receptor binding"/>
    <property type="evidence" value="ECO:0000353"/>
    <property type="project" value="UniProtKB"/>
</dbReference>
<dbReference type="GO" id="GO:0019722">
    <property type="term" value="P:calcium-mediated signaling"/>
    <property type="evidence" value="ECO:0000318"/>
    <property type="project" value="GO_Central"/>
</dbReference>
<dbReference type="GO" id="GO:0060326">
    <property type="term" value="P:cell chemotaxis"/>
    <property type="evidence" value="ECO:0000318"/>
    <property type="project" value="GO_Central"/>
</dbReference>
<dbReference type="GO" id="GO:0006935">
    <property type="term" value="P:chemotaxis"/>
    <property type="evidence" value="ECO:0000304"/>
    <property type="project" value="ProtInc"/>
</dbReference>
<dbReference type="GO" id="GO:0007186">
    <property type="term" value="P:G protein-coupled receptor signaling pathway"/>
    <property type="evidence" value="ECO:0000304"/>
    <property type="project" value="ProtInc"/>
</dbReference>
<dbReference type="GO" id="GO:0006955">
    <property type="term" value="P:immune response"/>
    <property type="evidence" value="ECO:0000318"/>
    <property type="project" value="GO_Central"/>
</dbReference>
<dbReference type="GO" id="GO:0006954">
    <property type="term" value="P:inflammatory response"/>
    <property type="evidence" value="ECO:0000250"/>
    <property type="project" value="UniProtKB"/>
</dbReference>
<dbReference type="GO" id="GO:0007204">
    <property type="term" value="P:positive regulation of cytosolic calcium ion concentration"/>
    <property type="evidence" value="ECO:0000318"/>
    <property type="project" value="GO_Central"/>
</dbReference>
<dbReference type="CDD" id="cd15171">
    <property type="entry name" value="7tmA_CCRL2"/>
    <property type="match status" value="1"/>
</dbReference>
<dbReference type="FunFam" id="1.20.1070.10:FF:000130">
    <property type="entry name" value="Chemokine (C-C motif) receptor 2"/>
    <property type="match status" value="1"/>
</dbReference>
<dbReference type="Gene3D" id="1.20.1070.10">
    <property type="entry name" value="Rhodopsin 7-helix transmembrane proteins"/>
    <property type="match status" value="1"/>
</dbReference>
<dbReference type="InterPro" id="IPR050119">
    <property type="entry name" value="CCR1-9-like"/>
</dbReference>
<dbReference type="InterPro" id="IPR000355">
    <property type="entry name" value="Chemokine_rcpt"/>
</dbReference>
<dbReference type="InterPro" id="IPR000276">
    <property type="entry name" value="GPCR_Rhodpsn"/>
</dbReference>
<dbReference type="InterPro" id="IPR017452">
    <property type="entry name" value="GPCR_Rhodpsn_7TM"/>
</dbReference>
<dbReference type="PANTHER" id="PTHR10489:SF655">
    <property type="entry name" value="C-C CHEMOKINE RECEPTOR-LIKE 2"/>
    <property type="match status" value="1"/>
</dbReference>
<dbReference type="PANTHER" id="PTHR10489">
    <property type="entry name" value="CELL ADHESION MOLECULE"/>
    <property type="match status" value="1"/>
</dbReference>
<dbReference type="Pfam" id="PF00001">
    <property type="entry name" value="7tm_1"/>
    <property type="match status" value="1"/>
</dbReference>
<dbReference type="PRINTS" id="PR00657">
    <property type="entry name" value="CCCHEMOKINER"/>
</dbReference>
<dbReference type="PRINTS" id="PR00237">
    <property type="entry name" value="GPCRRHODOPSN"/>
</dbReference>
<dbReference type="SUPFAM" id="SSF81321">
    <property type="entry name" value="Family A G protein-coupled receptor-like"/>
    <property type="match status" value="1"/>
</dbReference>
<dbReference type="PROSITE" id="PS50262">
    <property type="entry name" value="G_PROTEIN_RECEP_F1_2"/>
    <property type="match status" value="1"/>
</dbReference>
<keyword id="KW-0025">Alternative splicing</keyword>
<keyword id="KW-1003">Cell membrane</keyword>
<keyword id="KW-1015">Disulfide bond</keyword>
<keyword id="KW-0297">G-protein coupled receptor</keyword>
<keyword id="KW-0325">Glycoprotein</keyword>
<keyword id="KW-0472">Membrane</keyword>
<keyword id="KW-1267">Proteomics identification</keyword>
<keyword id="KW-0675">Receptor</keyword>
<keyword id="KW-1185">Reference proteome</keyword>
<keyword id="KW-0807">Transducer</keyword>
<keyword id="KW-0812">Transmembrane</keyword>
<keyword id="KW-1133">Transmembrane helix</keyword>
<sequence>MANYTLAPEDEYDVLIEGELESDEAEQCDKYDAQALSAQLVPSLCSAVFVIGVLDNLLVVLILVKYKGLKRVENIYLLNLAVSNLCFLLTLPFWAHAGGDPMCKILIGLYFVGLYSETFFNCLLTVQRYLVFLHKGNFFSARRRVPCGIITSVLAWVTAILATLPEFVVYKPQMEDQKYKCAFSRTPFLPADETFWKHFLTLKMNISVLVLPLFIFTFLYVQMRKTLRFREQRYSLFKLVFAIMVVFLLMWAPYNIAFFLSTFKEHFSLSDCKSSYNLDKSVHITKLIATTHCCINPLLYAFLDGTFSKYLCRCFHLRSNTPLQPRGQSAQGTSREEPDHSTEV</sequence>
<comment type="function">
    <text>Receptor for CCL19 and chemerin/RARRES2. Does not appear to be a signaling receptor, but may have a role in modulating chemokine-triggered immune responses by capturing and internalizing CCL19 or by presenting RARRES2 ligand to CMKLR1, a functional signaling receptors. Plays a critical role for the development of Th2 responses.</text>
</comment>
<comment type="interaction">
    <interactant intactId="EBI-12874086">
        <id>O00421-2</id>
    </interactant>
    <interactant intactId="EBI-12003442">
        <id>Q8WVX3-2</id>
        <label>C4orf3</label>
    </interactant>
    <organismsDiffer>false</organismsDiffer>
    <experiments>3</experiments>
</comment>
<comment type="subcellular location">
    <subcellularLocation>
        <location evidence="8 9">Cell membrane</location>
        <topology evidence="8 9">Multi-pass membrane protein</topology>
    </subcellularLocation>
</comment>
<comment type="alternative products">
    <event type="alternative splicing"/>
    <isoform>
        <id>O00421-1</id>
        <name>1</name>
        <name>CRAM-B</name>
        <sequence type="displayed"/>
    </isoform>
    <isoform>
        <id>O00421-2</id>
        <name>2</name>
        <name>CRAM-A</name>
        <sequence type="described" ref="VSP_018584"/>
    </isoform>
</comment>
<comment type="tissue specificity">
    <text evidence="4 5 8 10">Expressed abundantly in immunal tissues such as spleen, fetal liver, lymph node and bone marrow. Strong expression also in lung and heart. Expressed in almost all hematopoietic cells including monocytes, macrophages, PMNs, T-cells (both CD4+ and CD8+), monocyte-derived iDCs, NK cells, and CD34+ progenitor cells. B-cells expressed isoform 1 but not isoform 2. Up-regulated on synovial neutrophils of rheumatoid arthritis patients.</text>
</comment>
<comment type="induction">
    <text evidence="8">Up-regulated by CCL5 on the pre-B-cell lines NALM-6 and G2.</text>
</comment>
<comment type="domain">
    <text>Lacks the conserved DRYLAIV motif in the second intracellular loop that is required for signaling of functional chemokine receptors.</text>
</comment>
<comment type="miscellaneous">
    <text evidence="17">It was initially reported that CCRL2 responds functionally to CCL2, CCL5, CCL7, and CCL8 via intracellular calcium mobilization and transwell chemotaxis although no evidence for a direct ligand-receptor interaction was provided in this report. These results are now controversial, and other studies failed to confirm CCRL2 recognition and transwell chemotaxis of these chemokines or a series of other CC- and CXC-chemokines using CCRL2-transfected cells (PubMed:15188357).</text>
</comment>
<comment type="similarity">
    <text evidence="2">Belongs to the G-protein coupled receptor 1 family.</text>
</comment>
<gene>
    <name type="primary">CCRL2</name>
    <name type="synonym">CCR11</name>
    <name type="synonym">CCR6</name>
    <name type="synonym">CKRX</name>
    <name type="synonym">CRAM</name>
    <name type="synonym">HCR</name>
</gene>
<feature type="chain" id="PRO_0000236798" description="C-C chemokine receptor-like 2">
    <location>
        <begin position="1"/>
        <end position="344"/>
    </location>
</feature>
<feature type="topological domain" description="Extracellular" evidence="1">
    <location>
        <begin position="1"/>
        <end position="43"/>
    </location>
</feature>
<feature type="transmembrane region" description="Helical; Name=1" evidence="1">
    <location>
        <begin position="44"/>
        <end position="64"/>
    </location>
</feature>
<feature type="topological domain" description="Cytoplasmic" evidence="1">
    <location>
        <begin position="65"/>
        <end position="74"/>
    </location>
</feature>
<feature type="transmembrane region" description="Helical; Name=2" evidence="1">
    <location>
        <begin position="75"/>
        <end position="95"/>
    </location>
</feature>
<feature type="topological domain" description="Extracellular" evidence="1">
    <location>
        <begin position="96"/>
        <end position="104"/>
    </location>
</feature>
<feature type="transmembrane region" description="Helical; Name=3" evidence="1">
    <location>
        <begin position="105"/>
        <end position="125"/>
    </location>
</feature>
<feature type="topological domain" description="Cytoplasmic" evidence="1">
    <location>
        <begin position="126"/>
        <end position="144"/>
    </location>
</feature>
<feature type="transmembrane region" description="Helical; Name=4" evidence="1">
    <location>
        <begin position="145"/>
        <end position="165"/>
    </location>
</feature>
<feature type="topological domain" description="Extracellular" evidence="1">
    <location>
        <begin position="166"/>
        <end position="198"/>
    </location>
</feature>
<feature type="transmembrane region" description="Helical; Name=5" evidence="1">
    <location>
        <begin position="199"/>
        <end position="219"/>
    </location>
</feature>
<feature type="topological domain" description="Cytoplasmic" evidence="1">
    <location>
        <begin position="220"/>
        <end position="238"/>
    </location>
</feature>
<feature type="transmembrane region" description="Helical; Name=6" evidence="1">
    <location>
        <begin position="239"/>
        <end position="259"/>
    </location>
</feature>
<feature type="topological domain" description="Extracellular" evidence="1">
    <location>
        <begin position="260"/>
        <end position="286"/>
    </location>
</feature>
<feature type="transmembrane region" description="Helical; Name=7" evidence="1">
    <location>
        <begin position="287"/>
        <end position="307"/>
    </location>
</feature>
<feature type="topological domain" description="Cytoplasmic" evidence="1">
    <location>
        <begin position="308"/>
        <end position="344"/>
    </location>
</feature>
<feature type="region of interest" description="Disordered" evidence="3">
    <location>
        <begin position="324"/>
        <end position="344"/>
    </location>
</feature>
<feature type="compositionally biased region" description="Polar residues" evidence="3">
    <location>
        <begin position="324"/>
        <end position="333"/>
    </location>
</feature>
<feature type="compositionally biased region" description="Basic and acidic residues" evidence="3">
    <location>
        <begin position="334"/>
        <end position="344"/>
    </location>
</feature>
<feature type="glycosylation site" description="N-linked (GlcNAc...) asparagine" evidence="1">
    <location>
        <position position="3"/>
    </location>
</feature>
<feature type="disulfide bond" evidence="2">
    <location>
        <begin position="103"/>
        <end position="181"/>
    </location>
</feature>
<feature type="splice variant" id="VSP_018584" description="In isoform 2." evidence="14 15">
    <original>M</original>
    <variation>MIYTRFLKGSLKM</variation>
    <location>
        <position position="1"/>
    </location>
</feature>
<feature type="sequence variant" id="VAR_049385" description="In dbSNP:rs11574443.">
    <original>Y</original>
    <variation>C</variation>
    <location>
        <position position="4"/>
    </location>
</feature>
<feature type="sequence variant" id="VAR_026488" description="In dbSNP:rs3204849." evidence="6 7 10 11 13">
    <original>F</original>
    <variation>Y</variation>
    <location>
        <position position="167"/>
    </location>
</feature>
<feature type="sequence variant" id="VAR_026489" description="In dbSNP:rs6441977." evidence="6">
    <original>V</original>
    <variation>M</variation>
    <location>
        <position position="168"/>
    </location>
</feature>
<feature type="sequence variant" id="VAR_026490" description="In dbSNP:rs3204850." evidence="12">
    <original>I</original>
    <variation>V</variation>
    <location>
        <position position="243"/>
    </location>
</feature>
<feature type="sequence conflict" description="In Ref. 5; BAG59270." evidence="16" ref="5">
    <original>C</original>
    <variation>S</variation>
    <location>
        <position position="45"/>
    </location>
</feature>
<feature type="sequence conflict" description="In Ref. 5; BAG59270." evidence="16" ref="5">
    <original>K</original>
    <variation>R</variation>
    <location>
        <position position="135"/>
    </location>
</feature>
<feature type="sequence conflict" description="In Ref. 4; CAC82985." evidence="16" ref="4">
    <original>T</original>
    <variation>Q</variation>
    <location>
        <position position="158"/>
    </location>
</feature>
<feature type="sequence conflict" description="In Ref. 5; BAG59270." evidence="16" ref="5">
    <original>S</original>
    <variation>P</variation>
    <location>
        <position position="334"/>
    </location>
</feature>
<reference key="1">
    <citation type="journal article" date="1998" name="Biochem. Biophys. Res. Commun.">
        <title>Cloning and characterization of a novel human chemokine receptor.</title>
        <authorList>
            <person name="Fan P."/>
            <person name="Kyaw H."/>
            <person name="Su K."/>
            <person name="Zeng Z."/>
            <person name="Augustus M."/>
            <person name="Carter K.C."/>
            <person name="Li Y."/>
        </authorList>
    </citation>
    <scope>NUCLEOTIDE SEQUENCE [MRNA] (ISOFORM 1)</scope>
    <scope>TISSUE SPECIFICITY</scope>
    <scope>VARIANT TYR-167</scope>
</reference>
<reference key="2">
    <citation type="submission" date="1997-07" db="EMBL/GenBank/DDBJ databases">
        <title>Haplotype analysis of a gene cluster containing CCR5 and a new member of chemokine receptor gene family.</title>
        <authorList>
            <person name="Ansari-Lari M.A."/>
            <person name="Liu X.-M."/>
            <person name="Gorrell J.H."/>
            <person name="Gibbs R.A."/>
        </authorList>
    </citation>
    <scope>NUCLEOTIDE SEQUENCE [MRNA] (ISOFORM 1)</scope>
    <scope>VARIANT TYR-167</scope>
    <source>
        <tissue>Leukocyte</tissue>
    </source>
</reference>
<reference key="3">
    <citation type="submission" date="1997-07" db="EMBL/GenBank/DDBJ databases">
        <title>CRAM: a novel human chemokine receptor-like gene expressed in activated monocytes.</title>
        <authorList>
            <person name="Gish K."/>
            <person name="McClanahan T.K."/>
            <person name="Moore K.W."/>
        </authorList>
    </citation>
    <scope>NUCLEOTIDE SEQUENCE [MRNA] (ISOFORMS 1 AND 2)</scope>
    <scope>VARIANT VAL-243</scope>
    <source>
        <tissue>Monocyte</tissue>
    </source>
</reference>
<reference key="4">
    <citation type="submission" date="2001-08" db="EMBL/GenBank/DDBJ databases">
        <title>Cloning and characterisation of a new MCP-1 chemokine receptor CCR11.</title>
        <authorList>
            <person name="Biber K.P.H."/>
        </authorList>
    </citation>
    <scope>NUCLEOTIDE SEQUENCE [MRNA] (ISOFORM 1)</scope>
    <source>
        <tissue>Microglia</tissue>
    </source>
</reference>
<reference key="5">
    <citation type="journal article" date="2004" name="Nat. Genet.">
        <title>Complete sequencing and characterization of 21,243 full-length human cDNAs.</title>
        <authorList>
            <person name="Ota T."/>
            <person name="Suzuki Y."/>
            <person name="Nishikawa T."/>
            <person name="Otsuki T."/>
            <person name="Sugiyama T."/>
            <person name="Irie R."/>
            <person name="Wakamatsu A."/>
            <person name="Hayashi K."/>
            <person name="Sato H."/>
            <person name="Nagai K."/>
            <person name="Kimura K."/>
            <person name="Makita H."/>
            <person name="Sekine M."/>
            <person name="Obayashi M."/>
            <person name="Nishi T."/>
            <person name="Shibahara T."/>
            <person name="Tanaka T."/>
            <person name="Ishii S."/>
            <person name="Yamamoto J."/>
            <person name="Saito K."/>
            <person name="Kawai Y."/>
            <person name="Isono Y."/>
            <person name="Nakamura Y."/>
            <person name="Nagahari K."/>
            <person name="Murakami K."/>
            <person name="Yasuda T."/>
            <person name="Iwayanagi T."/>
            <person name="Wagatsuma M."/>
            <person name="Shiratori A."/>
            <person name="Sudo H."/>
            <person name="Hosoiri T."/>
            <person name="Kaku Y."/>
            <person name="Kodaira H."/>
            <person name="Kondo H."/>
            <person name="Sugawara M."/>
            <person name="Takahashi M."/>
            <person name="Kanda K."/>
            <person name="Yokoi T."/>
            <person name="Furuya T."/>
            <person name="Kikkawa E."/>
            <person name="Omura Y."/>
            <person name="Abe K."/>
            <person name="Kamihara K."/>
            <person name="Katsuta N."/>
            <person name="Sato K."/>
            <person name="Tanikawa M."/>
            <person name="Yamazaki M."/>
            <person name="Ninomiya K."/>
            <person name="Ishibashi T."/>
            <person name="Yamashita H."/>
            <person name="Murakawa K."/>
            <person name="Fujimori K."/>
            <person name="Tanai H."/>
            <person name="Kimata M."/>
            <person name="Watanabe M."/>
            <person name="Hiraoka S."/>
            <person name="Chiba Y."/>
            <person name="Ishida S."/>
            <person name="Ono Y."/>
            <person name="Takiguchi S."/>
            <person name="Watanabe S."/>
            <person name="Yosida M."/>
            <person name="Hotuta T."/>
            <person name="Kusano J."/>
            <person name="Kanehori K."/>
            <person name="Takahashi-Fujii A."/>
            <person name="Hara H."/>
            <person name="Tanase T.-O."/>
            <person name="Nomura Y."/>
            <person name="Togiya S."/>
            <person name="Komai F."/>
            <person name="Hara R."/>
            <person name="Takeuchi K."/>
            <person name="Arita M."/>
            <person name="Imose N."/>
            <person name="Musashino K."/>
            <person name="Yuuki H."/>
            <person name="Oshima A."/>
            <person name="Sasaki N."/>
            <person name="Aotsuka S."/>
            <person name="Yoshikawa Y."/>
            <person name="Matsunawa H."/>
            <person name="Ichihara T."/>
            <person name="Shiohata N."/>
            <person name="Sano S."/>
            <person name="Moriya S."/>
            <person name="Momiyama H."/>
            <person name="Satoh N."/>
            <person name="Takami S."/>
            <person name="Terashima Y."/>
            <person name="Suzuki O."/>
            <person name="Nakagawa S."/>
            <person name="Senoh A."/>
            <person name="Mizoguchi H."/>
            <person name="Goto Y."/>
            <person name="Shimizu F."/>
            <person name="Wakebe H."/>
            <person name="Hishigaki H."/>
            <person name="Watanabe T."/>
            <person name="Sugiyama A."/>
            <person name="Takemoto M."/>
            <person name="Kawakami B."/>
            <person name="Yamazaki M."/>
            <person name="Watanabe K."/>
            <person name="Kumagai A."/>
            <person name="Itakura S."/>
            <person name="Fukuzumi Y."/>
            <person name="Fujimori Y."/>
            <person name="Komiyama M."/>
            <person name="Tashiro H."/>
            <person name="Tanigami A."/>
            <person name="Fujiwara T."/>
            <person name="Ono T."/>
            <person name="Yamada K."/>
            <person name="Fujii Y."/>
            <person name="Ozaki K."/>
            <person name="Hirao M."/>
            <person name="Ohmori Y."/>
            <person name="Kawabata A."/>
            <person name="Hikiji T."/>
            <person name="Kobatake N."/>
            <person name="Inagaki H."/>
            <person name="Ikema Y."/>
            <person name="Okamoto S."/>
            <person name="Okitani R."/>
            <person name="Kawakami T."/>
            <person name="Noguchi S."/>
            <person name="Itoh T."/>
            <person name="Shigeta K."/>
            <person name="Senba T."/>
            <person name="Matsumura K."/>
            <person name="Nakajima Y."/>
            <person name="Mizuno T."/>
            <person name="Morinaga M."/>
            <person name="Sasaki M."/>
            <person name="Togashi T."/>
            <person name="Oyama M."/>
            <person name="Hata H."/>
            <person name="Watanabe M."/>
            <person name="Komatsu T."/>
            <person name="Mizushima-Sugano J."/>
            <person name="Satoh T."/>
            <person name="Shirai Y."/>
            <person name="Takahashi Y."/>
            <person name="Nakagawa K."/>
            <person name="Okumura K."/>
            <person name="Nagase T."/>
            <person name="Nomura N."/>
            <person name="Kikuchi H."/>
            <person name="Masuho Y."/>
            <person name="Yamashita R."/>
            <person name="Nakai K."/>
            <person name="Yada T."/>
            <person name="Nakamura Y."/>
            <person name="Ohara O."/>
            <person name="Isogai T."/>
            <person name="Sugano S."/>
        </authorList>
    </citation>
    <scope>NUCLEOTIDE SEQUENCE [LARGE SCALE MRNA] (ISOFORM 2)</scope>
    <source>
        <tissue>Umbilical cord blood</tissue>
    </source>
</reference>
<reference key="6">
    <citation type="submission" date="2003-07" db="EMBL/GenBank/DDBJ databases">
        <title>cDNA clones of human proteins involved in signal transduction sequenced by the Guthrie cDNA resource center (www.cdna.org).</title>
        <authorList>
            <person name="Kopatz S.A."/>
            <person name="Aronstam R.S."/>
            <person name="Sharma S.V."/>
        </authorList>
    </citation>
    <scope>NUCLEOTIDE SEQUENCE [LARGE SCALE MRNA] (ISOFORM 1)</scope>
    <scope>VARIANT TYR-167</scope>
    <source>
        <tissue>Lung</tissue>
    </source>
</reference>
<reference key="7">
    <citation type="journal article" date="2006" name="Nature">
        <title>The DNA sequence, annotation and analysis of human chromosome 3.</title>
        <authorList>
            <person name="Muzny D.M."/>
            <person name="Scherer S.E."/>
            <person name="Kaul R."/>
            <person name="Wang J."/>
            <person name="Yu J."/>
            <person name="Sudbrak R."/>
            <person name="Buhay C.J."/>
            <person name="Chen R."/>
            <person name="Cree A."/>
            <person name="Ding Y."/>
            <person name="Dugan-Rocha S."/>
            <person name="Gill R."/>
            <person name="Gunaratne P."/>
            <person name="Harris R.A."/>
            <person name="Hawes A.C."/>
            <person name="Hernandez J."/>
            <person name="Hodgson A.V."/>
            <person name="Hume J."/>
            <person name="Jackson A."/>
            <person name="Khan Z.M."/>
            <person name="Kovar-Smith C."/>
            <person name="Lewis L.R."/>
            <person name="Lozado R.J."/>
            <person name="Metzker M.L."/>
            <person name="Milosavljevic A."/>
            <person name="Miner G.R."/>
            <person name="Morgan M.B."/>
            <person name="Nazareth L.V."/>
            <person name="Scott G."/>
            <person name="Sodergren E."/>
            <person name="Song X.-Z."/>
            <person name="Steffen D."/>
            <person name="Wei S."/>
            <person name="Wheeler D.A."/>
            <person name="Wright M.W."/>
            <person name="Worley K.C."/>
            <person name="Yuan Y."/>
            <person name="Zhang Z."/>
            <person name="Adams C.Q."/>
            <person name="Ansari-Lari M.A."/>
            <person name="Ayele M."/>
            <person name="Brown M.J."/>
            <person name="Chen G."/>
            <person name="Chen Z."/>
            <person name="Clendenning J."/>
            <person name="Clerc-Blankenburg K.P."/>
            <person name="Chen R."/>
            <person name="Chen Z."/>
            <person name="Davis C."/>
            <person name="Delgado O."/>
            <person name="Dinh H.H."/>
            <person name="Dong W."/>
            <person name="Draper H."/>
            <person name="Ernst S."/>
            <person name="Fu G."/>
            <person name="Gonzalez-Garay M.L."/>
            <person name="Garcia D.K."/>
            <person name="Gillett W."/>
            <person name="Gu J."/>
            <person name="Hao B."/>
            <person name="Haugen E."/>
            <person name="Havlak P."/>
            <person name="He X."/>
            <person name="Hennig S."/>
            <person name="Hu S."/>
            <person name="Huang W."/>
            <person name="Jackson L.R."/>
            <person name="Jacob L.S."/>
            <person name="Kelly S.H."/>
            <person name="Kube M."/>
            <person name="Levy R."/>
            <person name="Li Z."/>
            <person name="Liu B."/>
            <person name="Liu J."/>
            <person name="Liu W."/>
            <person name="Lu J."/>
            <person name="Maheshwari M."/>
            <person name="Nguyen B.-V."/>
            <person name="Okwuonu G.O."/>
            <person name="Palmeiri A."/>
            <person name="Pasternak S."/>
            <person name="Perez L.M."/>
            <person name="Phelps K.A."/>
            <person name="Plopper F.J."/>
            <person name="Qiang B."/>
            <person name="Raymond C."/>
            <person name="Rodriguez R."/>
            <person name="Saenphimmachak C."/>
            <person name="Santibanez J."/>
            <person name="Shen H."/>
            <person name="Shen Y."/>
            <person name="Subramanian S."/>
            <person name="Tabor P.E."/>
            <person name="Verduzco D."/>
            <person name="Waldron L."/>
            <person name="Wang J."/>
            <person name="Wang J."/>
            <person name="Wang Q."/>
            <person name="Williams G.A."/>
            <person name="Wong G.K.-S."/>
            <person name="Yao Z."/>
            <person name="Zhang J."/>
            <person name="Zhang X."/>
            <person name="Zhao G."/>
            <person name="Zhou J."/>
            <person name="Zhou Y."/>
            <person name="Nelson D."/>
            <person name="Lehrach H."/>
            <person name="Reinhardt R."/>
            <person name="Naylor S.L."/>
            <person name="Yang H."/>
            <person name="Olson M."/>
            <person name="Weinstock G."/>
            <person name="Gibbs R.A."/>
        </authorList>
    </citation>
    <scope>NUCLEOTIDE SEQUENCE [LARGE SCALE GENOMIC DNA]</scope>
    <scope>VARIANT TYR-167</scope>
</reference>
<reference key="8">
    <citation type="journal article" date="2004" name="Genome Res.">
        <title>The status, quality, and expansion of the NIH full-length cDNA project: the Mammalian Gene Collection (MGC).</title>
        <authorList>
            <consortium name="The MGC Project Team"/>
        </authorList>
    </citation>
    <scope>NUCLEOTIDE SEQUENCE [LARGE SCALE MRNA] (ISOFORM 1)</scope>
    <scope>VARIANTS TYR-167 AND MET-168</scope>
    <source>
        <tissue>Brain</tissue>
        <tissue>Lung</tissue>
        <tissue>Pancreas</tissue>
        <tissue>Spleen</tissue>
        <tissue>Testis</tissue>
    </source>
</reference>
<reference key="9">
    <citation type="journal article" date="2002" name="Eur. J. Immunol.">
        <title>Distribution and regulation of expression of the putative human chemokine receptor HCR in leukocyte populations.</title>
        <authorList>
            <person name="Migeotte I."/>
            <person name="Franssen J.D."/>
            <person name="Goriely S."/>
            <person name="Willems F."/>
            <person name="Parmentier M."/>
        </authorList>
    </citation>
    <scope>TISSUE SPECIFICITY</scope>
</reference>
<reference key="10">
    <citation type="journal article" date="2004" name="Arthritis Rheum.">
        <title>Up-regulated expression and activation of the orphan chemokine receptor, CCRL2, in rheumatoid arthritis.</title>
        <authorList>
            <person name="Galligan C.L."/>
            <person name="Matsuyama W."/>
            <person name="Matsukawa A."/>
            <person name="Mizuta H."/>
            <person name="Hodge D.R."/>
            <person name="Howard O.M."/>
            <person name="Yoshimura T."/>
        </authorList>
    </citation>
    <scope>TISSUE SPECIFICITY</scope>
    <scope>LACK OF RESPOND BY CCL2</scope>
</reference>
<reference key="11">
    <citation type="journal article" date="2008" name="Immunology">
        <title>Human B cells express the orphan chemokine receptor CRAM-A/B in a maturation-stage-dependent and CCL5-modulated manner.</title>
        <authorList>
            <person name="Hartmann T.N."/>
            <person name="Leick M."/>
            <person name="Ewers S."/>
            <person name="Diefenbacher A."/>
            <person name="Schraufstatter I."/>
            <person name="Honczarenko M."/>
            <person name="Burger M."/>
        </authorList>
    </citation>
    <scope>TISSUE SPECIFICITY</scope>
    <scope>SUBCELLULAR LOCATION</scope>
    <scope>INDUCTION</scope>
</reference>
<reference key="12">
    <citation type="journal article" date="2010" name="Immunology">
        <title>CCL19 is a specific ligand of the constitutively recycling atypical human chemokine receptor CRAM-B.</title>
        <authorList>
            <person name="Leick M."/>
            <person name="Catusse J."/>
            <person name="Follo M."/>
            <person name="Nibbs R.J."/>
            <person name="Hartmann T.N."/>
            <person name="Veelken H."/>
            <person name="Burger M."/>
        </authorList>
    </citation>
    <scope>SUBCELLULAR LOCATION</scope>
    <scope>LIGAND-BINDING</scope>
</reference>